<sequence length="399" mass="42277">MNIHEYQAKAVLQPFGVSLSKGVAILKASEAEAAAKQLPGPVWVVKSQIHAGGRGKGKFKEASAGSQGGVRLAKSIDEVKQFAQEMLGATLVTLQTGPAGKQVNRLYIEEGSAIDKEFYLSLLVDRATSRVSFVVSTEGGMNIEDVAHDTPEKIISFSVDPATGIMPHHGRIVAKTLGLTGELAKQAGKLTTQLYTAFVAKDMEMLEINPLVLTKDGELRCLDAKMSFDSNSLYRQPDVVALRDTTEEDAKEIEASKHELAYIALEGTIGCMVNGAGLAMATLDIIKLYGESPANFLDVGGGATEEKVTAAFKIITADPNVKGILVNIFGGIMKCDVIARGVIAAVKTVGLEVPLVVRLEGTNVEEGKAIIRDSGLNVLSADDLDDAAQKIVNAVKKAA</sequence>
<feature type="chain" id="PRO_1000082190" description="Succinate--CoA ligase [ADP-forming] subunit beta">
    <location>
        <begin position="1"/>
        <end position="399"/>
    </location>
</feature>
<feature type="domain" description="ATP-grasp" evidence="1">
    <location>
        <begin position="9"/>
        <end position="254"/>
    </location>
</feature>
<feature type="binding site" evidence="1">
    <location>
        <position position="46"/>
    </location>
    <ligand>
        <name>ATP</name>
        <dbReference type="ChEBI" id="CHEBI:30616"/>
    </ligand>
</feature>
<feature type="binding site" evidence="1">
    <location>
        <begin position="53"/>
        <end position="55"/>
    </location>
    <ligand>
        <name>ATP</name>
        <dbReference type="ChEBI" id="CHEBI:30616"/>
    </ligand>
</feature>
<feature type="binding site" evidence="1">
    <location>
        <position position="109"/>
    </location>
    <ligand>
        <name>ATP</name>
        <dbReference type="ChEBI" id="CHEBI:30616"/>
    </ligand>
</feature>
<feature type="binding site" evidence="1">
    <location>
        <position position="112"/>
    </location>
    <ligand>
        <name>ATP</name>
        <dbReference type="ChEBI" id="CHEBI:30616"/>
    </ligand>
</feature>
<feature type="binding site" evidence="1">
    <location>
        <position position="117"/>
    </location>
    <ligand>
        <name>ATP</name>
        <dbReference type="ChEBI" id="CHEBI:30616"/>
    </ligand>
</feature>
<feature type="binding site" evidence="1">
    <location>
        <position position="209"/>
    </location>
    <ligand>
        <name>Mg(2+)</name>
        <dbReference type="ChEBI" id="CHEBI:18420"/>
    </ligand>
</feature>
<feature type="binding site" evidence="1">
    <location>
        <position position="223"/>
    </location>
    <ligand>
        <name>Mg(2+)</name>
        <dbReference type="ChEBI" id="CHEBI:18420"/>
    </ligand>
</feature>
<feature type="binding site" evidence="1">
    <location>
        <position position="274"/>
    </location>
    <ligand>
        <name>substrate</name>
        <note>ligand shared with subunit alpha</note>
    </ligand>
</feature>
<feature type="binding site" evidence="1">
    <location>
        <begin position="331"/>
        <end position="333"/>
    </location>
    <ligand>
        <name>substrate</name>
        <note>ligand shared with subunit alpha</note>
    </ligand>
</feature>
<reference key="1">
    <citation type="submission" date="2006-09" db="EMBL/GenBank/DDBJ databases">
        <title>Complete sequence of Rhodopseudomonas palustris BisA53.</title>
        <authorList>
            <consortium name="US DOE Joint Genome Institute"/>
            <person name="Copeland A."/>
            <person name="Lucas S."/>
            <person name="Lapidus A."/>
            <person name="Barry K."/>
            <person name="Detter J.C."/>
            <person name="Glavina del Rio T."/>
            <person name="Hammon N."/>
            <person name="Israni S."/>
            <person name="Dalin E."/>
            <person name="Tice H."/>
            <person name="Pitluck S."/>
            <person name="Chain P."/>
            <person name="Malfatti S."/>
            <person name="Shin M."/>
            <person name="Vergez L."/>
            <person name="Schmutz J."/>
            <person name="Larimer F."/>
            <person name="Land M."/>
            <person name="Hauser L."/>
            <person name="Pelletier D.A."/>
            <person name="Kyrpides N."/>
            <person name="Kim E."/>
            <person name="Harwood C.S."/>
            <person name="Oda Y."/>
            <person name="Richardson P."/>
        </authorList>
    </citation>
    <scope>NUCLEOTIDE SEQUENCE [LARGE SCALE GENOMIC DNA]</scope>
    <source>
        <strain>BisA53</strain>
    </source>
</reference>
<accession>Q07UX6</accession>
<keyword id="KW-0067">ATP-binding</keyword>
<keyword id="KW-0436">Ligase</keyword>
<keyword id="KW-0460">Magnesium</keyword>
<keyword id="KW-0479">Metal-binding</keyword>
<keyword id="KW-0547">Nucleotide-binding</keyword>
<keyword id="KW-0816">Tricarboxylic acid cycle</keyword>
<comment type="function">
    <text evidence="1">Succinyl-CoA synthetase functions in the citric acid cycle (TCA), coupling the hydrolysis of succinyl-CoA to the synthesis of either ATP or GTP and thus represents the only step of substrate-level phosphorylation in the TCA. The beta subunit provides nucleotide specificity of the enzyme and binds the substrate succinate, while the binding sites for coenzyme A and phosphate are found in the alpha subunit.</text>
</comment>
<comment type="catalytic activity">
    <reaction evidence="1">
        <text>succinate + ATP + CoA = succinyl-CoA + ADP + phosphate</text>
        <dbReference type="Rhea" id="RHEA:17661"/>
        <dbReference type="ChEBI" id="CHEBI:30031"/>
        <dbReference type="ChEBI" id="CHEBI:30616"/>
        <dbReference type="ChEBI" id="CHEBI:43474"/>
        <dbReference type="ChEBI" id="CHEBI:57287"/>
        <dbReference type="ChEBI" id="CHEBI:57292"/>
        <dbReference type="ChEBI" id="CHEBI:456216"/>
        <dbReference type="EC" id="6.2.1.5"/>
    </reaction>
    <physiologicalReaction direction="right-to-left" evidence="1">
        <dbReference type="Rhea" id="RHEA:17663"/>
    </physiologicalReaction>
</comment>
<comment type="catalytic activity">
    <reaction evidence="1">
        <text>GTP + succinate + CoA = succinyl-CoA + GDP + phosphate</text>
        <dbReference type="Rhea" id="RHEA:22120"/>
        <dbReference type="ChEBI" id="CHEBI:30031"/>
        <dbReference type="ChEBI" id="CHEBI:37565"/>
        <dbReference type="ChEBI" id="CHEBI:43474"/>
        <dbReference type="ChEBI" id="CHEBI:57287"/>
        <dbReference type="ChEBI" id="CHEBI:57292"/>
        <dbReference type="ChEBI" id="CHEBI:58189"/>
    </reaction>
    <physiologicalReaction direction="right-to-left" evidence="1">
        <dbReference type="Rhea" id="RHEA:22122"/>
    </physiologicalReaction>
</comment>
<comment type="cofactor">
    <cofactor evidence="1">
        <name>Mg(2+)</name>
        <dbReference type="ChEBI" id="CHEBI:18420"/>
    </cofactor>
    <text evidence="1">Binds 1 Mg(2+) ion per subunit.</text>
</comment>
<comment type="pathway">
    <text evidence="1">Carbohydrate metabolism; tricarboxylic acid cycle; succinate from succinyl-CoA (ligase route): step 1/1.</text>
</comment>
<comment type="subunit">
    <text evidence="1">Heterotetramer of two alpha and two beta subunits.</text>
</comment>
<comment type="similarity">
    <text evidence="1">Belongs to the succinate/malate CoA ligase beta subunit family.</text>
</comment>
<dbReference type="EC" id="6.2.1.5" evidence="1"/>
<dbReference type="EMBL" id="CP000463">
    <property type="protein sequence ID" value="ABJ04258.1"/>
    <property type="molecule type" value="Genomic_DNA"/>
</dbReference>
<dbReference type="SMR" id="Q07UX6"/>
<dbReference type="STRING" id="316055.RPE_0299"/>
<dbReference type="KEGG" id="rpe:RPE_0299"/>
<dbReference type="eggNOG" id="COG0045">
    <property type="taxonomic scope" value="Bacteria"/>
</dbReference>
<dbReference type="HOGENOM" id="CLU_037430_0_2_5"/>
<dbReference type="OrthoDB" id="9802602at2"/>
<dbReference type="UniPathway" id="UPA00223">
    <property type="reaction ID" value="UER00999"/>
</dbReference>
<dbReference type="GO" id="GO:0005829">
    <property type="term" value="C:cytosol"/>
    <property type="evidence" value="ECO:0007669"/>
    <property type="project" value="TreeGrafter"/>
</dbReference>
<dbReference type="GO" id="GO:0042709">
    <property type="term" value="C:succinate-CoA ligase complex"/>
    <property type="evidence" value="ECO:0007669"/>
    <property type="project" value="TreeGrafter"/>
</dbReference>
<dbReference type="GO" id="GO:0005524">
    <property type="term" value="F:ATP binding"/>
    <property type="evidence" value="ECO:0007669"/>
    <property type="project" value="UniProtKB-UniRule"/>
</dbReference>
<dbReference type="GO" id="GO:0000287">
    <property type="term" value="F:magnesium ion binding"/>
    <property type="evidence" value="ECO:0007669"/>
    <property type="project" value="UniProtKB-UniRule"/>
</dbReference>
<dbReference type="GO" id="GO:0004775">
    <property type="term" value="F:succinate-CoA ligase (ADP-forming) activity"/>
    <property type="evidence" value="ECO:0007669"/>
    <property type="project" value="UniProtKB-UniRule"/>
</dbReference>
<dbReference type="GO" id="GO:0004776">
    <property type="term" value="F:succinate-CoA ligase (GDP-forming) activity"/>
    <property type="evidence" value="ECO:0007669"/>
    <property type="project" value="RHEA"/>
</dbReference>
<dbReference type="GO" id="GO:0006104">
    <property type="term" value="P:succinyl-CoA metabolic process"/>
    <property type="evidence" value="ECO:0007669"/>
    <property type="project" value="TreeGrafter"/>
</dbReference>
<dbReference type="GO" id="GO:0006099">
    <property type="term" value="P:tricarboxylic acid cycle"/>
    <property type="evidence" value="ECO:0007669"/>
    <property type="project" value="UniProtKB-UniRule"/>
</dbReference>
<dbReference type="FunFam" id="3.30.1490.20:FF:000002">
    <property type="entry name" value="Succinate--CoA ligase [ADP-forming] subunit beta"/>
    <property type="match status" value="1"/>
</dbReference>
<dbReference type="FunFam" id="3.30.470.20:FF:000002">
    <property type="entry name" value="Succinate--CoA ligase [ADP-forming] subunit beta"/>
    <property type="match status" value="1"/>
</dbReference>
<dbReference type="FunFam" id="3.40.50.261:FF:000001">
    <property type="entry name" value="Succinate--CoA ligase [ADP-forming] subunit beta"/>
    <property type="match status" value="1"/>
</dbReference>
<dbReference type="Gene3D" id="3.30.1490.20">
    <property type="entry name" value="ATP-grasp fold, A domain"/>
    <property type="match status" value="1"/>
</dbReference>
<dbReference type="Gene3D" id="3.30.470.20">
    <property type="entry name" value="ATP-grasp fold, B domain"/>
    <property type="match status" value="1"/>
</dbReference>
<dbReference type="Gene3D" id="3.40.50.261">
    <property type="entry name" value="Succinyl-CoA synthetase domains"/>
    <property type="match status" value="1"/>
</dbReference>
<dbReference type="HAMAP" id="MF_00558">
    <property type="entry name" value="Succ_CoA_beta"/>
    <property type="match status" value="1"/>
</dbReference>
<dbReference type="InterPro" id="IPR011761">
    <property type="entry name" value="ATP-grasp"/>
</dbReference>
<dbReference type="InterPro" id="IPR013650">
    <property type="entry name" value="ATP-grasp_succ-CoA_synth-type"/>
</dbReference>
<dbReference type="InterPro" id="IPR013815">
    <property type="entry name" value="ATP_grasp_subdomain_1"/>
</dbReference>
<dbReference type="InterPro" id="IPR017866">
    <property type="entry name" value="Succ-CoA_synthase_bsu_CS"/>
</dbReference>
<dbReference type="InterPro" id="IPR005811">
    <property type="entry name" value="SUCC_ACL_C"/>
</dbReference>
<dbReference type="InterPro" id="IPR005809">
    <property type="entry name" value="Succ_CoA_ligase-like_bsu"/>
</dbReference>
<dbReference type="InterPro" id="IPR016102">
    <property type="entry name" value="Succinyl-CoA_synth-like"/>
</dbReference>
<dbReference type="NCBIfam" id="NF001913">
    <property type="entry name" value="PRK00696.1"/>
    <property type="match status" value="1"/>
</dbReference>
<dbReference type="NCBIfam" id="TIGR01016">
    <property type="entry name" value="sucCoAbeta"/>
    <property type="match status" value="1"/>
</dbReference>
<dbReference type="PANTHER" id="PTHR11815:SF10">
    <property type="entry name" value="SUCCINATE--COA LIGASE [GDP-FORMING] SUBUNIT BETA, MITOCHONDRIAL"/>
    <property type="match status" value="1"/>
</dbReference>
<dbReference type="PANTHER" id="PTHR11815">
    <property type="entry name" value="SUCCINYL-COA SYNTHETASE BETA CHAIN"/>
    <property type="match status" value="1"/>
</dbReference>
<dbReference type="Pfam" id="PF08442">
    <property type="entry name" value="ATP-grasp_2"/>
    <property type="match status" value="1"/>
</dbReference>
<dbReference type="Pfam" id="PF00549">
    <property type="entry name" value="Ligase_CoA"/>
    <property type="match status" value="1"/>
</dbReference>
<dbReference type="PIRSF" id="PIRSF001554">
    <property type="entry name" value="SucCS_beta"/>
    <property type="match status" value="1"/>
</dbReference>
<dbReference type="SUPFAM" id="SSF56059">
    <property type="entry name" value="Glutathione synthetase ATP-binding domain-like"/>
    <property type="match status" value="1"/>
</dbReference>
<dbReference type="SUPFAM" id="SSF52210">
    <property type="entry name" value="Succinyl-CoA synthetase domains"/>
    <property type="match status" value="1"/>
</dbReference>
<dbReference type="PROSITE" id="PS50975">
    <property type="entry name" value="ATP_GRASP"/>
    <property type="match status" value="1"/>
</dbReference>
<dbReference type="PROSITE" id="PS01217">
    <property type="entry name" value="SUCCINYL_COA_LIG_3"/>
    <property type="match status" value="1"/>
</dbReference>
<evidence type="ECO:0000255" key="1">
    <source>
        <dbReference type="HAMAP-Rule" id="MF_00558"/>
    </source>
</evidence>
<proteinExistence type="inferred from homology"/>
<protein>
    <recommendedName>
        <fullName evidence="1">Succinate--CoA ligase [ADP-forming] subunit beta</fullName>
        <ecNumber evidence="1">6.2.1.5</ecNumber>
    </recommendedName>
    <alternativeName>
        <fullName evidence="1">Succinyl-CoA synthetase subunit beta</fullName>
        <shortName evidence="1">SCS-beta</shortName>
    </alternativeName>
</protein>
<name>SUCC_RHOP5</name>
<organism>
    <name type="scientific">Rhodopseudomonas palustris (strain BisA53)</name>
    <dbReference type="NCBI Taxonomy" id="316055"/>
    <lineage>
        <taxon>Bacteria</taxon>
        <taxon>Pseudomonadati</taxon>
        <taxon>Pseudomonadota</taxon>
        <taxon>Alphaproteobacteria</taxon>
        <taxon>Hyphomicrobiales</taxon>
        <taxon>Nitrobacteraceae</taxon>
        <taxon>Rhodopseudomonas</taxon>
    </lineage>
</organism>
<gene>
    <name evidence="1" type="primary">sucC</name>
    <name type="ordered locus">RPE_0299</name>
</gene>